<comment type="function">
    <text evidence="1">Involved in the biosynthesis of ADP-glucose, a building block required for the elongation reactions to produce glycogen. Catalyzes the reaction between ATP and alpha-D-glucose 1-phosphate (G1P) to produce pyrophosphate and ADP-Glc.</text>
</comment>
<comment type="catalytic activity">
    <reaction evidence="1">
        <text>alpha-D-glucose 1-phosphate + ATP + H(+) = ADP-alpha-D-glucose + diphosphate</text>
        <dbReference type="Rhea" id="RHEA:12120"/>
        <dbReference type="ChEBI" id="CHEBI:15378"/>
        <dbReference type="ChEBI" id="CHEBI:30616"/>
        <dbReference type="ChEBI" id="CHEBI:33019"/>
        <dbReference type="ChEBI" id="CHEBI:57498"/>
        <dbReference type="ChEBI" id="CHEBI:58601"/>
        <dbReference type="EC" id="2.7.7.27"/>
    </reaction>
</comment>
<comment type="pathway">
    <text evidence="1">Glycan biosynthesis; glycogen biosynthesis.</text>
</comment>
<comment type="subunit">
    <text evidence="1">Homotetramer.</text>
</comment>
<comment type="similarity">
    <text evidence="1">Belongs to the bacterial/plant glucose-1-phosphate adenylyltransferase family.</text>
</comment>
<feature type="chain" id="PRO_0000195337" description="Glucose-1-phosphate adenylyltransferase">
    <location>
        <begin position="1"/>
        <end position="430"/>
    </location>
</feature>
<feature type="binding site" evidence="1">
    <location>
        <position position="163"/>
    </location>
    <ligand>
        <name>alpha-D-glucose 1-phosphate</name>
        <dbReference type="ChEBI" id="CHEBI:58601"/>
    </ligand>
</feature>
<feature type="binding site" evidence="1">
    <location>
        <begin position="178"/>
        <end position="179"/>
    </location>
    <ligand>
        <name>alpha-D-glucose 1-phosphate</name>
        <dbReference type="ChEBI" id="CHEBI:58601"/>
    </ligand>
</feature>
<feature type="binding site" evidence="1">
    <location>
        <position position="210"/>
    </location>
    <ligand>
        <name>alpha-D-glucose 1-phosphate</name>
        <dbReference type="ChEBI" id="CHEBI:58601"/>
    </ligand>
</feature>
<protein>
    <recommendedName>
        <fullName evidence="1">Glucose-1-phosphate adenylyltransferase</fullName>
        <ecNumber evidence="1">2.7.7.27</ecNumber>
    </recommendedName>
    <alternativeName>
        <fullName evidence="1">ADP-glucose pyrophosphorylase</fullName>
        <shortName evidence="1">ADPGlc PPase</shortName>
    </alternativeName>
    <alternativeName>
        <fullName evidence="1">ADP-glucose synthase</fullName>
    </alternativeName>
</protein>
<sequence>MKNVLAIILGGGAGSRLYPLTKQRAKPAVPLAGKYRLIDIPVSNCINADINKIYVLTQFNSASLNRHLSQTYNLSSGFGNGFVEVLAAQITPENPNWFQGTADAVRQYLWLIKEWDVDEYLILSGDHLYRMDYSQFIQRHRDTNADITLSVLPIDEKRASDFGLMKLDGSGRVVEFSEKPKGDELRAMQVDTTILGLDPVAAAAQPFIASMGIYVFKRDVLIDLLSHHPEQTDFGKEVIPAAATRYNTQAFLFNDYWEDIGTIASFYEANLALTQQPSPPFSFYDEQAPIYTRARYLPPTKLLDCQVTQSIIGEGCILKQCTVQNSVLGIRSRIEADCVIQDALLMGADFYETSELRHQNRANGKVPMGIGSGSTIRRAIVDKNAHIGQNVQIVNKDHVEEADREDLGFMIRSGIVVVVKGAVIPDNTVI</sequence>
<evidence type="ECO:0000255" key="1">
    <source>
        <dbReference type="HAMAP-Rule" id="MF_00624"/>
    </source>
</evidence>
<organism>
    <name type="scientific">Synechococcus sp. (strain ATCC 27144 / PCC 6301 / SAUG 1402/1)</name>
    <name type="common">Anacystis nidulans</name>
    <dbReference type="NCBI Taxonomy" id="269084"/>
    <lineage>
        <taxon>Bacteria</taxon>
        <taxon>Bacillati</taxon>
        <taxon>Cyanobacteriota</taxon>
        <taxon>Cyanophyceae</taxon>
        <taxon>Synechococcales</taxon>
        <taxon>Synechococcaceae</taxon>
        <taxon>Synechococcus</taxon>
    </lineage>
</organism>
<dbReference type="EC" id="2.7.7.27" evidence="1"/>
<dbReference type="EMBL" id="AP008231">
    <property type="protein sequence ID" value="BAD79111.1"/>
    <property type="molecule type" value="Genomic_DNA"/>
</dbReference>
<dbReference type="RefSeq" id="WP_011243233.1">
    <property type="nucleotide sequence ID" value="NZ_CP085785.1"/>
</dbReference>
<dbReference type="SMR" id="Q5N3K9"/>
<dbReference type="KEGG" id="syc:syc0921_d"/>
<dbReference type="eggNOG" id="COG0448">
    <property type="taxonomic scope" value="Bacteria"/>
</dbReference>
<dbReference type="UniPathway" id="UPA00164"/>
<dbReference type="Proteomes" id="UP000001175">
    <property type="component" value="Chromosome"/>
</dbReference>
<dbReference type="GO" id="GO:0031470">
    <property type="term" value="C:carboxysome"/>
    <property type="evidence" value="ECO:0007669"/>
    <property type="project" value="UniProtKB-ARBA"/>
</dbReference>
<dbReference type="GO" id="GO:0005524">
    <property type="term" value="F:ATP binding"/>
    <property type="evidence" value="ECO:0007669"/>
    <property type="project" value="UniProtKB-KW"/>
</dbReference>
<dbReference type="GO" id="GO:0008878">
    <property type="term" value="F:glucose-1-phosphate adenylyltransferase activity"/>
    <property type="evidence" value="ECO:0007669"/>
    <property type="project" value="UniProtKB-UniRule"/>
</dbReference>
<dbReference type="GO" id="GO:0043886">
    <property type="term" value="F:structural constituent of carboxysome shell"/>
    <property type="evidence" value="ECO:0007669"/>
    <property type="project" value="UniProtKB-ARBA"/>
</dbReference>
<dbReference type="GO" id="GO:0005978">
    <property type="term" value="P:glycogen biosynthetic process"/>
    <property type="evidence" value="ECO:0007669"/>
    <property type="project" value="UniProtKB-UniRule"/>
</dbReference>
<dbReference type="CDD" id="cd02508">
    <property type="entry name" value="ADP_Glucose_PP"/>
    <property type="match status" value="1"/>
</dbReference>
<dbReference type="CDD" id="cd04651">
    <property type="entry name" value="LbH_G1P_AT_C"/>
    <property type="match status" value="1"/>
</dbReference>
<dbReference type="FunFam" id="3.90.550.10:FF:000030">
    <property type="entry name" value="Glucose-1-phosphate adenylyltransferase"/>
    <property type="match status" value="1"/>
</dbReference>
<dbReference type="Gene3D" id="2.160.10.10">
    <property type="entry name" value="Hexapeptide repeat proteins"/>
    <property type="match status" value="1"/>
</dbReference>
<dbReference type="Gene3D" id="3.90.550.10">
    <property type="entry name" value="Spore Coat Polysaccharide Biosynthesis Protein SpsA, Chain A"/>
    <property type="match status" value="1"/>
</dbReference>
<dbReference type="HAMAP" id="MF_00624">
    <property type="entry name" value="GlgC"/>
    <property type="match status" value="1"/>
</dbReference>
<dbReference type="InterPro" id="IPR011831">
    <property type="entry name" value="ADP-Glc_PPase"/>
</dbReference>
<dbReference type="InterPro" id="IPR005836">
    <property type="entry name" value="ADP_Glu_pyroP_CS"/>
</dbReference>
<dbReference type="InterPro" id="IPR023049">
    <property type="entry name" value="GlgC_bac"/>
</dbReference>
<dbReference type="InterPro" id="IPR005835">
    <property type="entry name" value="NTP_transferase_dom"/>
</dbReference>
<dbReference type="InterPro" id="IPR029044">
    <property type="entry name" value="Nucleotide-diphossugar_trans"/>
</dbReference>
<dbReference type="InterPro" id="IPR011004">
    <property type="entry name" value="Trimer_LpxA-like_sf"/>
</dbReference>
<dbReference type="NCBIfam" id="TIGR02091">
    <property type="entry name" value="glgC"/>
    <property type="match status" value="1"/>
</dbReference>
<dbReference type="NCBIfam" id="NF002772">
    <property type="entry name" value="PRK02862.1"/>
    <property type="match status" value="1"/>
</dbReference>
<dbReference type="PANTHER" id="PTHR43523:SF12">
    <property type="entry name" value="GLUCOSE-1-PHOSPHATE ADENYLYLTRANSFERASE LARGE SUBUNIT 1, CHLOROPLASTIC-RELATED"/>
    <property type="match status" value="1"/>
</dbReference>
<dbReference type="PANTHER" id="PTHR43523">
    <property type="entry name" value="GLUCOSE-1-PHOSPHATE ADENYLYLTRANSFERASE-RELATED"/>
    <property type="match status" value="1"/>
</dbReference>
<dbReference type="Pfam" id="PF25247">
    <property type="entry name" value="LbH_GLGC"/>
    <property type="match status" value="1"/>
</dbReference>
<dbReference type="Pfam" id="PF00483">
    <property type="entry name" value="NTP_transferase"/>
    <property type="match status" value="1"/>
</dbReference>
<dbReference type="SUPFAM" id="SSF53448">
    <property type="entry name" value="Nucleotide-diphospho-sugar transferases"/>
    <property type="match status" value="1"/>
</dbReference>
<dbReference type="SUPFAM" id="SSF51161">
    <property type="entry name" value="Trimeric LpxA-like enzymes"/>
    <property type="match status" value="1"/>
</dbReference>
<dbReference type="PROSITE" id="PS00808">
    <property type="entry name" value="ADP_GLC_PYROPHOSPH_1"/>
    <property type="match status" value="1"/>
</dbReference>
<dbReference type="PROSITE" id="PS00809">
    <property type="entry name" value="ADP_GLC_PYROPHOSPH_2"/>
    <property type="match status" value="1"/>
</dbReference>
<dbReference type="PROSITE" id="PS00810">
    <property type="entry name" value="ADP_GLC_PYROPHOSPH_3"/>
    <property type="match status" value="1"/>
</dbReference>
<accession>Q5N3K9</accession>
<proteinExistence type="inferred from homology"/>
<reference key="1">
    <citation type="journal article" date="2007" name="Photosyn. Res.">
        <title>Complete nucleotide sequence of the freshwater unicellular cyanobacterium Synechococcus elongatus PCC 6301 chromosome: gene content and organization.</title>
        <authorList>
            <person name="Sugita C."/>
            <person name="Ogata K."/>
            <person name="Shikata M."/>
            <person name="Jikuya H."/>
            <person name="Takano J."/>
            <person name="Furumichi M."/>
            <person name="Kanehisa M."/>
            <person name="Omata T."/>
            <person name="Sugiura M."/>
            <person name="Sugita M."/>
        </authorList>
    </citation>
    <scope>NUCLEOTIDE SEQUENCE [LARGE SCALE GENOMIC DNA]</scope>
    <source>
        <strain>ATCC 27144 / PCC 6301 / SAUG 1402/1</strain>
    </source>
</reference>
<keyword id="KW-0067">ATP-binding</keyword>
<keyword id="KW-0119">Carbohydrate metabolism</keyword>
<keyword id="KW-0320">Glycogen biosynthesis</keyword>
<keyword id="KW-0321">Glycogen metabolism</keyword>
<keyword id="KW-0547">Nucleotide-binding</keyword>
<keyword id="KW-0548">Nucleotidyltransferase</keyword>
<keyword id="KW-0808">Transferase</keyword>
<gene>
    <name evidence="1" type="primary">glgC</name>
    <name type="ordered locus">syc0921_d</name>
</gene>
<name>GLGC_SYNP6</name>